<name>HEY2_DANRE</name>
<comment type="function">
    <text evidence="1 5 6">Transcriptional repressor (By similarity). Downstream effector of Notch signaling which regulates cell fate choice in angioblasts. Represses the venous cell fate, thereby promoting the arterial cell fate and aorta formation.</text>
</comment>
<comment type="subcellular location">
    <subcellularLocation>
        <location evidence="2 3">Nucleus</location>
    </subcellularLocation>
</comment>
<comment type="developmental stage">
    <text evidence="5 7">Expressed from the first somite stage. Expressed in lateral plate mesoderm before vessel formation, and thereafter in the aorta but not in the vein. At the 6-somite stage expression is seen in the lateral mesoderm of the head and trunk. While expression in the trunk lateral mesoderm is initially uniform, at the 16-somite stage, expression is restricted to angioblast precursors that have not yet migrated dorsally. At the 16-somite stage expression is also seen in the telencephalon, dorsal midbrain, neural crest and in the dorsal aorta and its vascular progenitors.</text>
</comment>
<comment type="induction">
    <text evidence="6">By activation of the Notch signaling pathway.</text>
</comment>
<comment type="similarity">
    <text evidence="8">Belongs to the HEY family.</text>
</comment>
<accession>Q9I9L0</accession>
<accession>Q24JW1</accession>
<organism>
    <name type="scientific">Danio rerio</name>
    <name type="common">Zebrafish</name>
    <name type="synonym">Brachydanio rerio</name>
    <dbReference type="NCBI Taxonomy" id="7955"/>
    <lineage>
        <taxon>Eukaryota</taxon>
        <taxon>Metazoa</taxon>
        <taxon>Chordata</taxon>
        <taxon>Craniata</taxon>
        <taxon>Vertebrata</taxon>
        <taxon>Euteleostomi</taxon>
        <taxon>Actinopterygii</taxon>
        <taxon>Neopterygii</taxon>
        <taxon>Teleostei</taxon>
        <taxon>Ostariophysi</taxon>
        <taxon>Cypriniformes</taxon>
        <taxon>Danionidae</taxon>
        <taxon>Danioninae</taxon>
        <taxon>Danio</taxon>
    </lineage>
</organism>
<gene>
    <name type="primary">hey2</name>
    <name type="synonym">grl</name>
    <name type="ORF">zgc:136746</name>
</gene>
<evidence type="ECO:0000250" key="1"/>
<evidence type="ECO:0000255" key="2">
    <source>
        <dbReference type="PROSITE-ProRule" id="PRU00380"/>
    </source>
</evidence>
<evidence type="ECO:0000255" key="3">
    <source>
        <dbReference type="PROSITE-ProRule" id="PRU00981"/>
    </source>
</evidence>
<evidence type="ECO:0000256" key="4">
    <source>
        <dbReference type="SAM" id="MobiDB-lite"/>
    </source>
</evidence>
<evidence type="ECO:0000269" key="5">
    <source>
    </source>
</evidence>
<evidence type="ECO:0000269" key="6">
    <source>
    </source>
</evidence>
<evidence type="ECO:0000269" key="7">
    <source>
    </source>
</evidence>
<evidence type="ECO:0000305" key="8"/>
<feature type="chain" id="PRO_0000245517" description="Hairy/enhancer-of-split related with YRPW motif protein 2">
    <location>
        <begin position="1"/>
        <end position="324"/>
    </location>
</feature>
<feature type="domain" description="bHLH" evidence="3">
    <location>
        <begin position="48"/>
        <end position="103"/>
    </location>
</feature>
<feature type="domain" description="Orange" evidence="2">
    <location>
        <begin position="122"/>
        <end position="157"/>
    </location>
</feature>
<feature type="region of interest" description="Disordered" evidence="4">
    <location>
        <begin position="1"/>
        <end position="34"/>
    </location>
</feature>
<feature type="region of interest" description="Disordered" evidence="4">
    <location>
        <begin position="294"/>
        <end position="324"/>
    </location>
</feature>
<feature type="short sequence motif" description="YRPW motif">
    <location>
        <begin position="314"/>
        <end position="317"/>
    </location>
</feature>
<feature type="compositionally biased region" description="Acidic residues" evidence="4">
    <location>
        <begin position="8"/>
        <end position="18"/>
    </location>
</feature>
<feature type="compositionally biased region" description="Polar residues" evidence="4">
    <location>
        <begin position="22"/>
        <end position="34"/>
    </location>
</feature>
<feature type="compositionally biased region" description="Low complexity" evidence="4">
    <location>
        <begin position="294"/>
        <end position="311"/>
    </location>
</feature>
<feature type="sequence conflict" description="In Ref. 1; AAF44780." evidence="8" ref="1">
    <original>E</original>
    <variation>Q</variation>
    <location>
        <position position="23"/>
    </location>
</feature>
<feature type="sequence conflict" description="In Ref. 1; AAF44780." evidence="8" ref="1">
    <original>S</original>
    <variation>N</variation>
    <location>
        <position position="310"/>
    </location>
</feature>
<keyword id="KW-0217">Developmental protein</keyword>
<keyword id="KW-0238">DNA-binding</keyword>
<keyword id="KW-0914">Notch signaling pathway</keyword>
<keyword id="KW-0539">Nucleus</keyword>
<keyword id="KW-1185">Reference proteome</keyword>
<keyword id="KW-0678">Repressor</keyword>
<keyword id="KW-0804">Transcription</keyword>
<keyword id="KW-0805">Transcription regulation</keyword>
<proteinExistence type="evidence at transcript level"/>
<protein>
    <recommendedName>
        <fullName>Hairy/enhancer-of-split related with YRPW motif protein 2</fullName>
    </recommendedName>
    <alternativeName>
        <fullName>Protein gridlock</fullName>
    </alternativeName>
</protein>
<reference key="1">
    <citation type="journal article" date="2000" name="Science">
        <title>Gridlock, an HLH gene required for assembly of the aorta in zebrafish.</title>
        <authorList>
            <person name="Zhong T.P."/>
            <person name="Rosenberg M."/>
            <person name="Mohideen M.-A.P.K."/>
            <person name="Weinstein B."/>
            <person name="Fishman M.C."/>
        </authorList>
    </citation>
    <scope>NUCLEOTIDE SEQUENCE [MRNA]</scope>
    <scope>FUNCTION</scope>
    <scope>DEVELOPMENTAL STAGE</scope>
</reference>
<reference key="2">
    <citation type="submission" date="2006-03" db="EMBL/GenBank/DDBJ databases">
        <authorList>
            <consortium name="NIH - Zebrafish Gene Collection (ZGC) project"/>
        </authorList>
    </citation>
    <scope>NUCLEOTIDE SEQUENCE [LARGE SCALE MRNA]</scope>
</reference>
<reference key="3">
    <citation type="journal article" date="2001" name="Nature">
        <title>Gridlock signalling pathway fashions the first embryonic artery.</title>
        <authorList>
            <person name="Zhong T.P."/>
            <person name="Childs S."/>
            <person name="Leu J.P."/>
            <person name="Fishman M.C."/>
        </authorList>
    </citation>
    <scope>FUNCTION</scope>
    <scope>INDUCTION</scope>
</reference>
<reference key="4">
    <citation type="journal article" date="2003" name="Dev. Genes Evol.">
        <title>Characterization of hey bHLH genes in teleost fish.</title>
        <authorList>
            <person name="Winkler C."/>
            <person name="Elmasri H."/>
            <person name="Klamt B."/>
            <person name="Volff J.-N."/>
            <person name="Gessler M."/>
        </authorList>
    </citation>
    <scope>DEVELOPMENTAL STAGE</scope>
</reference>
<dbReference type="EMBL" id="AF237948">
    <property type="protein sequence ID" value="AAF44780.1"/>
    <property type="molecule type" value="mRNA"/>
</dbReference>
<dbReference type="EMBL" id="BC114263">
    <property type="protein sequence ID" value="AAI14264.1"/>
    <property type="molecule type" value="mRNA"/>
</dbReference>
<dbReference type="RefSeq" id="NP_571697.2">
    <property type="nucleotide sequence ID" value="NM_131622.2"/>
</dbReference>
<dbReference type="SMR" id="Q9I9L0"/>
<dbReference type="DIP" id="DIP-46472N"/>
<dbReference type="ELM" id="Q9I9L0"/>
<dbReference type="FunCoup" id="Q9I9L0">
    <property type="interactions" value="105"/>
</dbReference>
<dbReference type="IntAct" id="Q9I9L0">
    <property type="interactions" value="1"/>
</dbReference>
<dbReference type="STRING" id="7955.ENSDARP00000002357"/>
<dbReference type="PaxDb" id="7955-ENSDARP00000002357"/>
<dbReference type="Ensembl" id="ENSDART00000023531">
    <property type="protein sequence ID" value="ENSDARP00000002357"/>
    <property type="gene ID" value="ENSDARG00000013441"/>
</dbReference>
<dbReference type="GeneID" id="58146"/>
<dbReference type="KEGG" id="dre:58146"/>
<dbReference type="AGR" id="ZFIN:ZDB-GENE-000526-1"/>
<dbReference type="CTD" id="23493"/>
<dbReference type="ZFIN" id="ZDB-GENE-000526-1">
    <property type="gene designation" value="hey2"/>
</dbReference>
<dbReference type="eggNOG" id="KOG4304">
    <property type="taxonomic scope" value="Eukaryota"/>
</dbReference>
<dbReference type="HOGENOM" id="CLU_048294_1_0_1"/>
<dbReference type="InParanoid" id="Q9I9L0"/>
<dbReference type="OMA" id="DTTPCRL"/>
<dbReference type="OrthoDB" id="6371181at2759"/>
<dbReference type="PhylomeDB" id="Q9I9L0"/>
<dbReference type="TreeFam" id="TF323617"/>
<dbReference type="PRO" id="PR:Q9I9L0"/>
<dbReference type="Proteomes" id="UP000000437">
    <property type="component" value="Chromosome 20"/>
</dbReference>
<dbReference type="Bgee" id="ENSDARG00000013441">
    <property type="expression patterns" value="Expressed in artery and 67 other cell types or tissues"/>
</dbReference>
<dbReference type="GO" id="GO:0005634">
    <property type="term" value="C:nucleus"/>
    <property type="evidence" value="ECO:0000318"/>
    <property type="project" value="GO_Central"/>
</dbReference>
<dbReference type="GO" id="GO:0046983">
    <property type="term" value="F:protein dimerization activity"/>
    <property type="evidence" value="ECO:0007669"/>
    <property type="project" value="InterPro"/>
</dbReference>
<dbReference type="GO" id="GO:0000978">
    <property type="term" value="F:RNA polymerase II cis-regulatory region sequence-specific DNA binding"/>
    <property type="evidence" value="ECO:0000318"/>
    <property type="project" value="GO_Central"/>
</dbReference>
<dbReference type="GO" id="GO:0060840">
    <property type="term" value="P:artery development"/>
    <property type="evidence" value="ECO:0000315"/>
    <property type="project" value="ZFIN"/>
</dbReference>
<dbReference type="GO" id="GO:0048844">
    <property type="term" value="P:artery morphogenesis"/>
    <property type="evidence" value="ECO:0000315"/>
    <property type="project" value="ZFIN"/>
</dbReference>
<dbReference type="GO" id="GO:0001568">
    <property type="term" value="P:blood vessel development"/>
    <property type="evidence" value="ECO:0000315"/>
    <property type="project" value="ZFIN"/>
</dbReference>
<dbReference type="GO" id="GO:0048514">
    <property type="term" value="P:blood vessel morphogenesis"/>
    <property type="evidence" value="ECO:0000315"/>
    <property type="project" value="ZFIN"/>
</dbReference>
<dbReference type="GO" id="GO:0060038">
    <property type="term" value="P:cardiac muscle cell proliferation"/>
    <property type="evidence" value="ECO:0000315"/>
    <property type="project" value="ZFIN"/>
</dbReference>
<dbReference type="GO" id="GO:0072359">
    <property type="term" value="P:circulatory system development"/>
    <property type="evidence" value="ECO:0000318"/>
    <property type="project" value="GO_Central"/>
</dbReference>
<dbReference type="GO" id="GO:0035912">
    <property type="term" value="P:dorsal aorta morphogenesis"/>
    <property type="evidence" value="ECO:0000315"/>
    <property type="project" value="ZFIN"/>
</dbReference>
<dbReference type="GO" id="GO:0007507">
    <property type="term" value="P:heart development"/>
    <property type="evidence" value="ECO:0000315"/>
    <property type="project" value="ZFIN"/>
</dbReference>
<dbReference type="GO" id="GO:0045892">
    <property type="term" value="P:negative regulation of DNA-templated transcription"/>
    <property type="evidence" value="ECO:0000316"/>
    <property type="project" value="ZFIN"/>
</dbReference>
<dbReference type="GO" id="GO:0007219">
    <property type="term" value="P:Notch signaling pathway"/>
    <property type="evidence" value="ECO:0000318"/>
    <property type="project" value="GO_Central"/>
</dbReference>
<dbReference type="GO" id="GO:0060853">
    <property type="term" value="P:Notch signaling pathway involved in arterial endothelial cell fate commitment"/>
    <property type="evidence" value="ECO:0000315"/>
    <property type="project" value="ZFIN"/>
</dbReference>
<dbReference type="GO" id="GO:0050767">
    <property type="term" value="P:regulation of neurogenesis"/>
    <property type="evidence" value="ECO:0000318"/>
    <property type="project" value="GO_Central"/>
</dbReference>
<dbReference type="GO" id="GO:0001570">
    <property type="term" value="P:vasculogenesis"/>
    <property type="evidence" value="ECO:0000315"/>
    <property type="project" value="ZFIN"/>
</dbReference>
<dbReference type="CDD" id="cd18920">
    <property type="entry name" value="bHLH-O_HEY2"/>
    <property type="match status" value="1"/>
</dbReference>
<dbReference type="FunFam" id="4.10.280.10:FF:000012">
    <property type="entry name" value="hairy/enhancer-of-split related with YRPW motif protein 1"/>
    <property type="match status" value="1"/>
</dbReference>
<dbReference type="Gene3D" id="6.10.250.980">
    <property type="match status" value="1"/>
</dbReference>
<dbReference type="Gene3D" id="4.10.280.10">
    <property type="entry name" value="Helix-loop-helix DNA-binding domain"/>
    <property type="match status" value="1"/>
</dbReference>
<dbReference type="InterPro" id="IPR011598">
    <property type="entry name" value="bHLH_dom"/>
</dbReference>
<dbReference type="InterPro" id="IPR050370">
    <property type="entry name" value="HES_HEY"/>
</dbReference>
<dbReference type="InterPro" id="IPR036638">
    <property type="entry name" value="HLH_DNA-bd_sf"/>
</dbReference>
<dbReference type="InterPro" id="IPR003650">
    <property type="entry name" value="Orange_dom"/>
</dbReference>
<dbReference type="PANTHER" id="PTHR10985">
    <property type="entry name" value="BASIC HELIX-LOOP-HELIX TRANSCRIPTION FACTOR, HES-RELATED"/>
    <property type="match status" value="1"/>
</dbReference>
<dbReference type="Pfam" id="PF07527">
    <property type="entry name" value="Hairy_orange"/>
    <property type="match status" value="1"/>
</dbReference>
<dbReference type="Pfam" id="PF00010">
    <property type="entry name" value="HLH"/>
    <property type="match status" value="1"/>
</dbReference>
<dbReference type="SMART" id="SM00353">
    <property type="entry name" value="HLH"/>
    <property type="match status" value="1"/>
</dbReference>
<dbReference type="SMART" id="SM00511">
    <property type="entry name" value="ORANGE"/>
    <property type="match status" value="1"/>
</dbReference>
<dbReference type="SUPFAM" id="SSF47459">
    <property type="entry name" value="HLH, helix-loop-helix DNA-binding domain"/>
    <property type="match status" value="1"/>
</dbReference>
<dbReference type="SUPFAM" id="SSF158457">
    <property type="entry name" value="Orange domain-like"/>
    <property type="match status" value="1"/>
</dbReference>
<dbReference type="PROSITE" id="PS50888">
    <property type="entry name" value="BHLH"/>
    <property type="match status" value="1"/>
</dbReference>
<dbReference type="PROSITE" id="PS51054">
    <property type="entry name" value="ORANGE"/>
    <property type="match status" value="1"/>
</dbReference>
<sequence length="324" mass="34329">MKRPCEDSTSDSDMDETIDVGSENNYSGQSNGSFIRCGSPTTTSQVMARKKRRGIIEKRRRDRINNSLSELRRLVPTAFEKQGSAKLEKAEILQMTVDHLKMLQATGGKGYFDAHSLAMDFLSIGFRECLTEVARYLSSVEGLDSSDPLRVRLVSHLSSCASQREAAAMTTSIAHHQQALHPHHWAAALHPIPAAFLQQSGLPSSESSSGRLSEAPQRGAALFSHSDSALRAPSTGSVAPCVPPLSTSLLSLSATVHAAAAAAAAQTFPLSFPAGFPLFSPSVTASSVASSTVSSSVSTSTTSQQSSGSSSKPYRPWGTEVGAF</sequence>